<proteinExistence type="inferred from homology"/>
<gene>
    <name type="primary">AKR1</name>
    <name type="ordered locus">CNBA4020</name>
</gene>
<comment type="function">
    <text evidence="1">Palmitoyltransferase specific for casein kinase 1.</text>
</comment>
<comment type="catalytic activity">
    <reaction>
        <text>L-cysteinyl-[protein] + hexadecanoyl-CoA = S-hexadecanoyl-L-cysteinyl-[protein] + CoA</text>
        <dbReference type="Rhea" id="RHEA:36683"/>
        <dbReference type="Rhea" id="RHEA-COMP:10131"/>
        <dbReference type="Rhea" id="RHEA-COMP:11032"/>
        <dbReference type="ChEBI" id="CHEBI:29950"/>
        <dbReference type="ChEBI" id="CHEBI:57287"/>
        <dbReference type="ChEBI" id="CHEBI:57379"/>
        <dbReference type="ChEBI" id="CHEBI:74151"/>
        <dbReference type="EC" id="2.3.1.225"/>
    </reaction>
</comment>
<comment type="subcellular location">
    <subcellularLocation>
        <location>Early endosome membrane</location>
        <topology>Multi-pass membrane protein</topology>
    </subcellularLocation>
    <subcellularLocation>
        <location evidence="1">Golgi apparatus membrane</location>
        <topology evidence="1">Multi-pass membrane protein</topology>
    </subcellularLocation>
</comment>
<comment type="domain">
    <text evidence="1">The DHHC domain is required for palmitoyltransferase activity.</text>
</comment>
<comment type="similarity">
    <text evidence="5">Belongs to the DHHC palmitoyltransferase family. AKR/ZDHHC17 subfamily.</text>
</comment>
<comment type="caution">
    <text evidence="5">It is uncertain whether Met-1 or Met-5 is the initiator.</text>
</comment>
<comment type="sequence caution" evidence="5">
    <conflict type="erroneous gene model prediction">
        <sequence resource="EMBL-CDS" id="EAL23286"/>
    </conflict>
</comment>
<protein>
    <recommendedName>
        <fullName>Palmitoyltransferase AKR1</fullName>
        <ecNumber>2.3.1.225</ecNumber>
    </recommendedName>
    <alternativeName>
        <fullName>Ankyrin repeat-containing protein AKR1</fullName>
    </alternativeName>
</protein>
<accession>P0CS67</accession>
<accession>Q55ZT8</accession>
<accession>Q5KP49</accession>
<feature type="chain" id="PRO_0000410346" description="Palmitoyltransferase AKR1">
    <location>
        <begin position="1"/>
        <end position="776"/>
    </location>
</feature>
<feature type="topological domain" description="Cytoplasmic" evidence="2">
    <location>
        <begin position="1"/>
        <end position="311"/>
    </location>
</feature>
<feature type="transmembrane region" description="Helical" evidence="2">
    <location>
        <begin position="312"/>
        <end position="332"/>
    </location>
</feature>
<feature type="topological domain" description="Lumenal" evidence="2">
    <location>
        <begin position="333"/>
        <end position="336"/>
    </location>
</feature>
<feature type="transmembrane region" description="Helical" evidence="2">
    <location>
        <begin position="337"/>
        <end position="357"/>
    </location>
</feature>
<feature type="topological domain" description="Cytoplasmic" evidence="2">
    <location>
        <begin position="358"/>
        <end position="368"/>
    </location>
</feature>
<feature type="transmembrane region" description="Helical" evidence="2">
    <location>
        <begin position="369"/>
        <end position="389"/>
    </location>
</feature>
<feature type="topological domain" description="Lumenal" evidence="2">
    <location>
        <begin position="390"/>
        <end position="402"/>
    </location>
</feature>
<feature type="transmembrane region" description="Helical" evidence="2">
    <location>
        <begin position="403"/>
        <end position="423"/>
    </location>
</feature>
<feature type="topological domain" description="Cytoplasmic" evidence="2">
    <location>
        <begin position="424"/>
        <end position="498"/>
    </location>
</feature>
<feature type="transmembrane region" description="Helical" evidence="2">
    <location>
        <begin position="499"/>
        <end position="519"/>
    </location>
</feature>
<feature type="topological domain" description="Lumenal" evidence="2">
    <location>
        <begin position="520"/>
        <end position="553"/>
    </location>
</feature>
<feature type="transmembrane region" description="Helical" evidence="2">
    <location>
        <begin position="554"/>
        <end position="574"/>
    </location>
</feature>
<feature type="topological domain" description="Cytoplasmic" evidence="2">
    <location>
        <begin position="575"/>
        <end position="776"/>
    </location>
</feature>
<feature type="repeat" description="ANK 1">
    <location>
        <begin position="68"/>
        <end position="97"/>
    </location>
</feature>
<feature type="repeat" description="ANK 2">
    <location>
        <begin position="103"/>
        <end position="132"/>
    </location>
</feature>
<feature type="repeat" description="ANK 3">
    <location>
        <begin position="137"/>
        <end position="166"/>
    </location>
</feature>
<feature type="repeat" description="ANK 4">
    <location>
        <begin position="170"/>
        <end position="199"/>
    </location>
</feature>
<feature type="repeat" description="ANK 5">
    <location>
        <begin position="203"/>
        <end position="232"/>
    </location>
</feature>
<feature type="repeat" description="ANK 6">
    <location>
        <begin position="236"/>
        <end position="265"/>
    </location>
</feature>
<feature type="domain" description="DHHC" evidence="3">
    <location>
        <begin position="454"/>
        <end position="504"/>
    </location>
</feature>
<feature type="region of interest" description="Disordered" evidence="4">
    <location>
        <begin position="38"/>
        <end position="58"/>
    </location>
</feature>
<feature type="region of interest" description="Disordered" evidence="4">
    <location>
        <begin position="628"/>
        <end position="665"/>
    </location>
</feature>
<feature type="compositionally biased region" description="Low complexity" evidence="4">
    <location>
        <begin position="629"/>
        <end position="645"/>
    </location>
</feature>
<feature type="active site" description="S-palmitoyl cysteine intermediate" evidence="1">
    <location>
        <position position="484"/>
    </location>
</feature>
<keyword id="KW-0012">Acyltransferase</keyword>
<keyword id="KW-0040">ANK repeat</keyword>
<keyword id="KW-0967">Endosome</keyword>
<keyword id="KW-0333">Golgi apparatus</keyword>
<keyword id="KW-0449">Lipoprotein</keyword>
<keyword id="KW-0472">Membrane</keyword>
<keyword id="KW-0564">Palmitate</keyword>
<keyword id="KW-0677">Repeat</keyword>
<keyword id="KW-0808">Transferase</keyword>
<keyword id="KW-0812">Transmembrane</keyword>
<keyword id="KW-1133">Transmembrane helix</keyword>
<reference key="1">
    <citation type="journal article" date="2005" name="Science">
        <title>The genome of the basidiomycetous yeast and human pathogen Cryptococcus neoformans.</title>
        <authorList>
            <person name="Loftus B.J."/>
            <person name="Fung E."/>
            <person name="Roncaglia P."/>
            <person name="Rowley D."/>
            <person name="Amedeo P."/>
            <person name="Bruno D."/>
            <person name="Vamathevan J."/>
            <person name="Miranda M."/>
            <person name="Anderson I.J."/>
            <person name="Fraser J.A."/>
            <person name="Allen J.E."/>
            <person name="Bosdet I.E."/>
            <person name="Brent M.R."/>
            <person name="Chiu R."/>
            <person name="Doering T.L."/>
            <person name="Donlin M.J."/>
            <person name="D'Souza C.A."/>
            <person name="Fox D.S."/>
            <person name="Grinberg V."/>
            <person name="Fu J."/>
            <person name="Fukushima M."/>
            <person name="Haas B.J."/>
            <person name="Huang J.C."/>
            <person name="Janbon G."/>
            <person name="Jones S.J.M."/>
            <person name="Koo H.L."/>
            <person name="Krzywinski M.I."/>
            <person name="Kwon-Chung K.J."/>
            <person name="Lengeler K.B."/>
            <person name="Maiti R."/>
            <person name="Marra M.A."/>
            <person name="Marra R.E."/>
            <person name="Mathewson C.A."/>
            <person name="Mitchell T.G."/>
            <person name="Pertea M."/>
            <person name="Riggs F.R."/>
            <person name="Salzberg S.L."/>
            <person name="Schein J.E."/>
            <person name="Shvartsbeyn A."/>
            <person name="Shin H."/>
            <person name="Shumway M."/>
            <person name="Specht C.A."/>
            <person name="Suh B.B."/>
            <person name="Tenney A."/>
            <person name="Utterback T.R."/>
            <person name="Wickes B.L."/>
            <person name="Wortman J.R."/>
            <person name="Wye N.H."/>
            <person name="Kronstad J.W."/>
            <person name="Lodge J.K."/>
            <person name="Heitman J."/>
            <person name="Davis R.W."/>
            <person name="Fraser C.M."/>
            <person name="Hyman R.W."/>
        </authorList>
    </citation>
    <scope>NUCLEOTIDE SEQUENCE [LARGE SCALE GENOMIC DNA]</scope>
    <source>
        <strain>B-3501A</strain>
    </source>
</reference>
<sequence>MDQEMTTVASPDIRVKATSPDSNRAVLEQSIVLSDSGRLDEGSSIRGGELERDSQEVGRETVREPLMCHDLDIHALAQRGDTAAIAAMLQENPSLNLSARDAQDVTPLHWAAINAHMGTCRLLIDSGADIDAIGGELKATPLQWAARNGHLYVVHLLISRGADPNIHDSQGFNTLHLITHSSAVMPLLYMLHQPVAIDEKDTDGHTALMWAAYQGDALSVDLLIRHGASVNSTDNAGMTPLHWAAVKGNKVSIMHLVEAGASLDAKEEAGKTPRDMAEELRGLVPFQKGLEEAGWSIDGVKMEGKLGPRNTILAIFLLPIAVLWLIFSTFKWLPVYVGVPFAIAEFMGMQYTVVLVLLGHIKAQDKVSTSNYFASIITASLIWVGYCWISRFAVNTPGYAFSNLGFIIMFVGCCWTFWTAIVTDPGFVPKGQQDAEIKEVLEDLVDAGRLNGTNFCIVCMARKPLRSKHCRTCNRCVARFDHHCPWIWNCVGAKNHRSFLLFVLFLIGGIILFIRLTIAYIQQNAPEYIPTPNPGLTTCDISTTLCQAGDFDPFLLCMALWSTLQLTWTSVLAISHLWQVSRQMTTFEVSNLGRYGFMGGRGGQSLRDQSGAMLKQAAAVGAGIGMSGAGEEAAGPPGAEAGPEGNALLPPPGGHVHGPQCRHGDHARGHSHGVLHICGALWKTLTGPLMTILGLDRFTKGKALGGMKRAGRDQNPFDMGMVKNCIDFWLPDNDVDYMTVYEIPPGGWRAYRRKLAMDKRVPGGKGRYEVVSEQEV</sequence>
<evidence type="ECO:0000250" key="1"/>
<evidence type="ECO:0000255" key="2"/>
<evidence type="ECO:0000255" key="3">
    <source>
        <dbReference type="PROSITE-ProRule" id="PRU00067"/>
    </source>
</evidence>
<evidence type="ECO:0000256" key="4">
    <source>
        <dbReference type="SAM" id="MobiDB-lite"/>
    </source>
</evidence>
<evidence type="ECO:0000305" key="5"/>
<organism>
    <name type="scientific">Cryptococcus neoformans var. neoformans serotype D (strain B-3501A)</name>
    <name type="common">Filobasidiella neoformans</name>
    <dbReference type="NCBI Taxonomy" id="283643"/>
    <lineage>
        <taxon>Eukaryota</taxon>
        <taxon>Fungi</taxon>
        <taxon>Dikarya</taxon>
        <taxon>Basidiomycota</taxon>
        <taxon>Agaricomycotina</taxon>
        <taxon>Tremellomycetes</taxon>
        <taxon>Tremellales</taxon>
        <taxon>Cryptococcaceae</taxon>
        <taxon>Cryptococcus</taxon>
        <taxon>Cryptococcus neoformans species complex</taxon>
    </lineage>
</organism>
<name>AKR1_CRYNB</name>
<dbReference type="EC" id="2.3.1.225"/>
<dbReference type="EMBL" id="AAEY01000002">
    <property type="protein sequence ID" value="EAL23286.1"/>
    <property type="status" value="ALT_SEQ"/>
    <property type="molecule type" value="Genomic_DNA"/>
</dbReference>
<dbReference type="RefSeq" id="XP_777933.1">
    <property type="nucleotide sequence ID" value="XM_772840.1"/>
</dbReference>
<dbReference type="SMR" id="P0CS67"/>
<dbReference type="EnsemblFungi" id="AAW40964">
    <property type="protein sequence ID" value="AAW40964"/>
    <property type="gene ID" value="CNA04190"/>
</dbReference>
<dbReference type="GeneID" id="4933661"/>
<dbReference type="KEGG" id="cnb:CNBA4020"/>
<dbReference type="HOGENOM" id="CLU_012510_1_0_1"/>
<dbReference type="OrthoDB" id="4643at5206"/>
<dbReference type="GO" id="GO:0031901">
    <property type="term" value="C:early endosome membrane"/>
    <property type="evidence" value="ECO:0007669"/>
    <property type="project" value="UniProtKB-SubCell"/>
</dbReference>
<dbReference type="GO" id="GO:0000139">
    <property type="term" value="C:Golgi membrane"/>
    <property type="evidence" value="ECO:0007669"/>
    <property type="project" value="UniProtKB-SubCell"/>
</dbReference>
<dbReference type="GO" id="GO:0019706">
    <property type="term" value="F:protein-cysteine S-palmitoyltransferase activity"/>
    <property type="evidence" value="ECO:0007669"/>
    <property type="project" value="UniProtKB-EC"/>
</dbReference>
<dbReference type="Gene3D" id="1.25.40.20">
    <property type="entry name" value="Ankyrin repeat-containing domain"/>
    <property type="match status" value="2"/>
</dbReference>
<dbReference type="InterPro" id="IPR002110">
    <property type="entry name" value="Ankyrin_rpt"/>
</dbReference>
<dbReference type="InterPro" id="IPR036770">
    <property type="entry name" value="Ankyrin_rpt-contain_sf"/>
</dbReference>
<dbReference type="InterPro" id="IPR001594">
    <property type="entry name" value="Palmitoyltrfase_DHHC"/>
</dbReference>
<dbReference type="PANTHER" id="PTHR24161">
    <property type="entry name" value="ANK_REP_REGION DOMAIN-CONTAINING PROTEIN-RELATED"/>
    <property type="match status" value="1"/>
</dbReference>
<dbReference type="PANTHER" id="PTHR24161:SF85">
    <property type="entry name" value="PALMITOYLTRANSFERASE HIP14"/>
    <property type="match status" value="1"/>
</dbReference>
<dbReference type="Pfam" id="PF12796">
    <property type="entry name" value="Ank_2"/>
    <property type="match status" value="2"/>
</dbReference>
<dbReference type="Pfam" id="PF01529">
    <property type="entry name" value="DHHC"/>
    <property type="match status" value="1"/>
</dbReference>
<dbReference type="SMART" id="SM00248">
    <property type="entry name" value="ANK"/>
    <property type="match status" value="5"/>
</dbReference>
<dbReference type="SUPFAM" id="SSF48403">
    <property type="entry name" value="Ankyrin repeat"/>
    <property type="match status" value="1"/>
</dbReference>
<dbReference type="PROSITE" id="PS50297">
    <property type="entry name" value="ANK_REP_REGION"/>
    <property type="match status" value="1"/>
</dbReference>
<dbReference type="PROSITE" id="PS50088">
    <property type="entry name" value="ANK_REPEAT"/>
    <property type="match status" value="4"/>
</dbReference>
<dbReference type="PROSITE" id="PS50216">
    <property type="entry name" value="DHHC"/>
    <property type="match status" value="1"/>
</dbReference>